<sequence>TTTVQYDPSEQYQPYPEQQEPFVQQQPPFVQQQQPFVQQQEPF</sequence>
<evidence type="ECO:0000250" key="1"/>
<evidence type="ECO:0000250" key="2">
    <source>
        <dbReference type="UniProtKB" id="P80356"/>
    </source>
</evidence>
<evidence type="ECO:0000255" key="3"/>
<evidence type="ECO:0000256" key="4">
    <source>
        <dbReference type="SAM" id="MobiDB-lite"/>
    </source>
</evidence>
<evidence type="ECO:0000269" key="5">
    <source>
    </source>
</evidence>
<evidence type="ECO:0000269" key="6">
    <source>
    </source>
</evidence>
<evidence type="ECO:0000303" key="7">
    <source>
    </source>
</evidence>
<evidence type="ECO:0000305" key="8"/>
<name>AVEF_AVESA</name>
<organism>
    <name type="scientific">Avena sativa</name>
    <name type="common">Oat</name>
    <dbReference type="NCBI Taxonomy" id="4498"/>
    <lineage>
        <taxon>Eukaryota</taxon>
        <taxon>Viridiplantae</taxon>
        <taxon>Streptophyta</taxon>
        <taxon>Embryophyta</taxon>
        <taxon>Tracheophyta</taxon>
        <taxon>Spermatophyta</taxon>
        <taxon>Magnoliopsida</taxon>
        <taxon>Liliopsida</taxon>
        <taxon>Poales</taxon>
        <taxon>Poaceae</taxon>
        <taxon>BOP clade</taxon>
        <taxon>Pooideae</taxon>
        <taxon>Poodae</taxon>
        <taxon>Poeae</taxon>
        <taxon>Poeae Chloroplast Group 1 (Aveneae type)</taxon>
        <taxon>Aveninae</taxon>
        <taxon>Avena</taxon>
    </lineage>
</organism>
<feature type="chain" id="PRO_0000239310" description="Avenin-F">
    <location>
        <begin position="1"/>
        <end position="43" status="greater than"/>
    </location>
</feature>
<feature type="repeat" description="1" evidence="3">
    <location>
        <begin position="21"/>
        <end position="26"/>
    </location>
</feature>
<feature type="repeat" description="2; approximate">
    <location>
        <begin position="27"/>
        <end position="34"/>
    </location>
</feature>
<feature type="repeat" description="3" evidence="3">
    <location>
        <begin position="35"/>
        <end position="40"/>
    </location>
</feature>
<feature type="region of interest" description="Disordered" evidence="4">
    <location>
        <begin position="1"/>
        <end position="23"/>
    </location>
</feature>
<feature type="region of interest" description="3 X 6 aa tandem repeats of P-F-V-Q-Q-Q" evidence="3">
    <location>
        <begin position="21"/>
        <end position="40"/>
    </location>
</feature>
<feature type="compositionally biased region" description="Low complexity" evidence="4">
    <location>
        <begin position="10"/>
        <end position="23"/>
    </location>
</feature>
<feature type="sequence conflict" description="In Ref. 2; AA sequence." evidence="8" ref="2">
    <original>E</original>
    <variation>Q</variation>
    <location>
        <position position="20"/>
    </location>
</feature>
<feature type="non-terminal residue" evidence="7">
    <location>
        <position position="43"/>
    </location>
</feature>
<dbReference type="PIR" id="S29207">
    <property type="entry name" value="S29207"/>
</dbReference>
<dbReference type="PIR" id="S29208">
    <property type="entry name" value="S29208"/>
</dbReference>
<dbReference type="GO" id="GO:0033095">
    <property type="term" value="C:aleurone grain"/>
    <property type="evidence" value="ECO:0007669"/>
    <property type="project" value="UniProtKB-SubCell"/>
</dbReference>
<dbReference type="GO" id="GO:0005773">
    <property type="term" value="C:vacuole"/>
    <property type="evidence" value="ECO:0007669"/>
    <property type="project" value="UniProtKB-KW"/>
</dbReference>
<dbReference type="GO" id="GO:0045735">
    <property type="term" value="F:nutrient reservoir activity"/>
    <property type="evidence" value="ECO:0007669"/>
    <property type="project" value="UniProtKB-KW"/>
</dbReference>
<reference evidence="8" key="1">
    <citation type="journal article" date="1987" name="Biochimie">
        <title>N-terminal sequences of oat avenins compared to other cereal prolamins.</title>
        <authorList>
            <person name="Pernollet J.-C."/>
            <person name="Huet J.-C."/>
            <person name="Galle A.-M."/>
            <person name="Sallantin M."/>
        </authorList>
    </citation>
    <scope>PROTEIN SEQUENCE</scope>
    <source>
        <strain evidence="6">cv. Rhea</strain>
        <tissue evidence="6">Seed</tissue>
    </source>
</reference>
<reference evidence="8" key="2">
    <citation type="journal article" date="1992" name="FEBS Lett.">
        <title>Identification of the three major coeliac immunoreactive proteins and one alpha-amylase inhibitor from oat endosperm.</title>
        <authorList>
            <person name="Rocher A."/>
            <person name="Colilla F."/>
            <person name="Ortiz M.L."/>
            <person name="Mendez E."/>
        </authorList>
    </citation>
    <scope>PROTEIN SEQUENCE OF 1-29</scope>
    <source>
        <tissue evidence="5">Endosperm</tissue>
    </source>
</reference>
<keyword id="KW-0020">Allergen</keyword>
<keyword id="KW-0903">Direct protein sequencing</keyword>
<keyword id="KW-0677">Repeat</keyword>
<keyword id="KW-0708">Seed storage protein</keyword>
<keyword id="KW-0758">Storage protein</keyword>
<keyword id="KW-0926">Vacuole</keyword>
<protein>
    <recommendedName>
        <fullName>Avenin-F</fullName>
    </recommendedName>
    <alternativeName>
        <fullName>Celiac immunoreactive protein 2</fullName>
        <shortName>CIP-2</shortName>
    </alternativeName>
    <alternativeName>
        <fullName>Gamma-3-avenin</fullName>
    </alternativeName>
    <alternativeName>
        <fullName>Prolamin</fullName>
    </alternativeName>
</protein>
<proteinExistence type="evidence at protein level"/>
<comment type="function">
    <text evidence="2">Seed storage protein. Serves as a source of nitrogen, carbon, and sulfur for the young developing seedling (By similarity).</text>
</comment>
<comment type="subunit">
    <text evidence="2">Monomer.</text>
</comment>
<comment type="subcellular location">
    <subcellularLocation>
        <location evidence="1">Vacuole</location>
        <location evidence="1">Aleurone grain</location>
    </subcellularLocation>
    <text evidence="1">Protein bodies inside vacuoles.</text>
</comment>
<comment type="allergen">
    <text evidence="1">Causes an allergic reaction in human. Avenins are one of the causes of celiac disease, also known as celiac sprue or gluten-sensitive enteropathy (By similarity).</text>
</comment>
<comment type="similarity">
    <text evidence="3">Belongs to the gliadin/glutenin family.</text>
</comment>
<accession>Q09097</accession>
<accession>Q9S8W7</accession>